<keyword id="KW-0153">Cholesterol metabolism</keyword>
<keyword id="KW-0325">Glycoprotein</keyword>
<keyword id="KW-0345">HDL</keyword>
<keyword id="KW-0443">Lipid metabolism</keyword>
<keyword id="KW-0445">Lipid transport</keyword>
<keyword id="KW-0449">Lipoprotein</keyword>
<keyword id="KW-0558">Oxidation</keyword>
<keyword id="KW-0564">Palmitate</keyword>
<keyword id="KW-0597">Phosphoprotein</keyword>
<keyword id="KW-0677">Repeat</keyword>
<keyword id="KW-0964">Secreted</keyword>
<keyword id="KW-0732">Signal</keyword>
<keyword id="KW-0753">Steroid metabolism</keyword>
<keyword id="KW-1207">Sterol metabolism</keyword>
<keyword id="KW-0813">Transport</keyword>
<evidence type="ECO:0000250" key="1"/>
<evidence type="ECO:0000250" key="2">
    <source>
        <dbReference type="UniProtKB" id="G5BQH5"/>
    </source>
</evidence>
<evidence type="ECO:0000250" key="3">
    <source>
        <dbReference type="UniProtKB" id="P02647"/>
    </source>
</evidence>
<evidence type="ECO:0000250" key="4">
    <source>
        <dbReference type="UniProtKB" id="P04639"/>
    </source>
</evidence>
<evidence type="ECO:0000305" key="5"/>
<organism>
    <name type="scientific">Papio hamadryas</name>
    <name type="common">Hamadryas baboon</name>
    <dbReference type="NCBI Taxonomy" id="9557"/>
    <lineage>
        <taxon>Eukaryota</taxon>
        <taxon>Metazoa</taxon>
        <taxon>Chordata</taxon>
        <taxon>Craniata</taxon>
        <taxon>Vertebrata</taxon>
        <taxon>Euteleostomi</taxon>
        <taxon>Mammalia</taxon>
        <taxon>Eutheria</taxon>
        <taxon>Euarchontoglires</taxon>
        <taxon>Primates</taxon>
        <taxon>Haplorrhini</taxon>
        <taxon>Catarrhini</taxon>
        <taxon>Cercopithecidae</taxon>
        <taxon>Cercopithecinae</taxon>
        <taxon>Papio</taxon>
    </lineage>
</organism>
<reference key="1">
    <citation type="journal article" date="1988" name="Gene">
        <title>The baboon gene for apolipoprotein A-I: characterization of a cDNA clone and identification of DNA polymorphisms for genetic studies of cholesterol metabolism.</title>
        <authorList>
            <person name="Hixson J.E."/>
            <person name="Borenstein S."/>
            <person name="Cox L.A."/>
            <person name="Rainwater D.L."/>
            <person name="Vandeberg J.L."/>
        </authorList>
    </citation>
    <scope>NUCLEOTIDE SEQUENCE [MRNA]</scope>
    <source>
        <tissue>Liver</tissue>
    </source>
</reference>
<name>APOA1_PAPHA</name>
<gene>
    <name type="primary">APOA1</name>
</gene>
<accession>P68293</accession>
<accession>P15568</accession>
<accession>P17929</accession>
<dbReference type="EMBL" id="M35634">
    <property type="protein sequence ID" value="AAA35380.1"/>
    <property type="molecule type" value="mRNA"/>
</dbReference>
<dbReference type="SMR" id="P68293"/>
<dbReference type="KEGG" id="panu:100126737"/>
<dbReference type="GO" id="GO:0042627">
    <property type="term" value="C:chylomicron"/>
    <property type="evidence" value="ECO:0007669"/>
    <property type="project" value="TreeGrafter"/>
</dbReference>
<dbReference type="GO" id="GO:1903561">
    <property type="term" value="C:extracellular vesicle"/>
    <property type="evidence" value="ECO:0007669"/>
    <property type="project" value="TreeGrafter"/>
</dbReference>
<dbReference type="GO" id="GO:0034364">
    <property type="term" value="C:high-density lipoprotein particle"/>
    <property type="evidence" value="ECO:0007669"/>
    <property type="project" value="UniProtKB-KW"/>
</dbReference>
<dbReference type="GO" id="GO:0034362">
    <property type="term" value="C:low-density lipoprotein particle"/>
    <property type="evidence" value="ECO:0007669"/>
    <property type="project" value="TreeGrafter"/>
</dbReference>
<dbReference type="GO" id="GO:0034361">
    <property type="term" value="C:very-low-density lipoprotein particle"/>
    <property type="evidence" value="ECO:0007669"/>
    <property type="project" value="TreeGrafter"/>
</dbReference>
<dbReference type="GO" id="GO:0120020">
    <property type="term" value="F:cholesterol transfer activity"/>
    <property type="evidence" value="ECO:0007669"/>
    <property type="project" value="TreeGrafter"/>
</dbReference>
<dbReference type="GO" id="GO:0060228">
    <property type="term" value="F:phosphatidylcholine-sterol O-acyltransferase activator activity"/>
    <property type="evidence" value="ECO:0007669"/>
    <property type="project" value="TreeGrafter"/>
</dbReference>
<dbReference type="GO" id="GO:0005543">
    <property type="term" value="F:phospholipid binding"/>
    <property type="evidence" value="ECO:0007669"/>
    <property type="project" value="TreeGrafter"/>
</dbReference>
<dbReference type="GO" id="GO:0042803">
    <property type="term" value="F:protein homodimerization activity"/>
    <property type="evidence" value="ECO:0000250"/>
    <property type="project" value="UniProtKB"/>
</dbReference>
<dbReference type="GO" id="GO:0055090">
    <property type="term" value="P:acylglycerol homeostasis"/>
    <property type="evidence" value="ECO:0007669"/>
    <property type="project" value="TreeGrafter"/>
</dbReference>
<dbReference type="GO" id="GO:0033344">
    <property type="term" value="P:cholesterol efflux"/>
    <property type="evidence" value="ECO:0007669"/>
    <property type="project" value="TreeGrafter"/>
</dbReference>
<dbReference type="GO" id="GO:0008203">
    <property type="term" value="P:cholesterol metabolic process"/>
    <property type="evidence" value="ECO:0007669"/>
    <property type="project" value="UniProtKB-KW"/>
</dbReference>
<dbReference type="GO" id="GO:0042157">
    <property type="term" value="P:lipoprotein metabolic process"/>
    <property type="evidence" value="ECO:0007669"/>
    <property type="project" value="InterPro"/>
</dbReference>
<dbReference type="GO" id="GO:0018206">
    <property type="term" value="P:peptidyl-methionine modification"/>
    <property type="evidence" value="ECO:0000250"/>
    <property type="project" value="UniProtKB"/>
</dbReference>
<dbReference type="GO" id="GO:0033700">
    <property type="term" value="P:phospholipid efflux"/>
    <property type="evidence" value="ECO:0007669"/>
    <property type="project" value="TreeGrafter"/>
</dbReference>
<dbReference type="GO" id="GO:0010875">
    <property type="term" value="P:positive regulation of cholesterol efflux"/>
    <property type="evidence" value="ECO:0000250"/>
    <property type="project" value="UniProtKB"/>
</dbReference>
<dbReference type="GO" id="GO:0050766">
    <property type="term" value="P:positive regulation of phagocytosis"/>
    <property type="evidence" value="ECO:0000250"/>
    <property type="project" value="UniProtKB"/>
</dbReference>
<dbReference type="GO" id="GO:1902995">
    <property type="term" value="P:positive regulation of phospholipid efflux"/>
    <property type="evidence" value="ECO:0000250"/>
    <property type="project" value="UniProtKB"/>
</dbReference>
<dbReference type="GO" id="GO:0018158">
    <property type="term" value="P:protein oxidation"/>
    <property type="evidence" value="ECO:0000250"/>
    <property type="project" value="UniProtKB"/>
</dbReference>
<dbReference type="GO" id="GO:0050821">
    <property type="term" value="P:protein stabilization"/>
    <property type="evidence" value="ECO:0000250"/>
    <property type="project" value="UniProtKB"/>
</dbReference>
<dbReference type="FunFam" id="1.20.120.20:FF:000001">
    <property type="entry name" value="Apolipoprotein A-I"/>
    <property type="match status" value="1"/>
</dbReference>
<dbReference type="FunFam" id="1.20.5.20:FF:000001">
    <property type="entry name" value="apolipoprotein A-I"/>
    <property type="match status" value="1"/>
</dbReference>
<dbReference type="Gene3D" id="1.20.5.20">
    <property type="match status" value="1"/>
</dbReference>
<dbReference type="Gene3D" id="6.10.140.380">
    <property type="match status" value="1"/>
</dbReference>
<dbReference type="Gene3D" id="1.20.120.20">
    <property type="entry name" value="Apolipoprotein"/>
    <property type="match status" value="1"/>
</dbReference>
<dbReference type="InterPro" id="IPR000074">
    <property type="entry name" value="ApoA_E"/>
</dbReference>
<dbReference type="InterPro" id="IPR050163">
    <property type="entry name" value="Apolipoprotein_A1/A4/E"/>
</dbReference>
<dbReference type="PANTHER" id="PTHR18976">
    <property type="entry name" value="APOLIPOPROTEIN"/>
    <property type="match status" value="1"/>
</dbReference>
<dbReference type="PANTHER" id="PTHR18976:SF11">
    <property type="entry name" value="APOLIPOPROTEIN A-I"/>
    <property type="match status" value="1"/>
</dbReference>
<dbReference type="Pfam" id="PF01442">
    <property type="entry name" value="Apolipoprotein"/>
    <property type="match status" value="1"/>
</dbReference>
<dbReference type="SUPFAM" id="SSF58113">
    <property type="entry name" value="Apolipoprotein A-I"/>
    <property type="match status" value="1"/>
</dbReference>
<feature type="signal peptide">
    <location>
        <begin position="1"/>
        <end position="18"/>
    </location>
</feature>
<feature type="chain" id="PRO_0000425332" description="Proapolipoprotein A-I">
    <location>
        <begin position="19"/>
        <end position="267"/>
    </location>
</feature>
<feature type="chain" id="PRO_0000001948" description="Apolipoprotein A-I">
    <location>
        <begin position="25"/>
        <end position="267"/>
    </location>
</feature>
<feature type="chain" id="PRO_0000416577" description="Truncated apolipoprotein A-I" evidence="1">
    <location>
        <begin position="25"/>
        <end position="266"/>
    </location>
</feature>
<feature type="repeat" description="1">
    <location>
        <begin position="68"/>
        <end position="89"/>
    </location>
</feature>
<feature type="repeat" description="2">
    <location>
        <begin position="90"/>
        <end position="111"/>
    </location>
</feature>
<feature type="repeat" description="3; half-length">
    <location>
        <begin position="112"/>
        <end position="122"/>
    </location>
</feature>
<feature type="repeat" description="4">
    <location>
        <begin position="123"/>
        <end position="144"/>
    </location>
</feature>
<feature type="repeat" description="5">
    <location>
        <begin position="145"/>
        <end position="166"/>
    </location>
</feature>
<feature type="repeat" description="6">
    <location>
        <begin position="167"/>
        <end position="188"/>
    </location>
</feature>
<feature type="repeat" description="7">
    <location>
        <begin position="189"/>
        <end position="210"/>
    </location>
</feature>
<feature type="repeat" description="8">
    <location>
        <begin position="211"/>
        <end position="232"/>
    </location>
</feature>
<feature type="repeat" description="9; half-length">
    <location>
        <begin position="233"/>
        <end position="243"/>
    </location>
</feature>
<feature type="repeat" description="10">
    <location>
        <begin position="244"/>
        <end position="267"/>
    </location>
</feature>
<feature type="region of interest" description="10 X approximate tandem repeats">
    <location>
        <begin position="68"/>
        <end position="267"/>
    </location>
</feature>
<feature type="modified residue" description="Methionine sulfoxide" evidence="1">
    <location>
        <position position="110"/>
    </location>
</feature>
<feature type="modified residue" description="Methionine sulfoxide" evidence="1">
    <location>
        <position position="136"/>
    </location>
</feature>
<sequence>MKATVLTLAVLFLTGSQARHFWQQDEPPQTPWDRVKDLVTVYVEALKDSGKDYVSQFEGSALGKQLNLKLLDNWDSVTSTVSKLREQLGPVTQEFWDNLEKETEGLRQEMSKDLEEVKAKVQPYLDDFQKKWQEEMELYRQKVEPLRAELHEGTRQKLHELHEKLSPLGEEVRDRARAHVDALRTHLAPYSDELRQRLAARLEALKENGGARLAEYHAKASEHLSTLSEKAKPALEDLRQGLLPVLESFKVSFLSALEEYTKKLSTQ</sequence>
<comment type="function">
    <text>Participates in the reverse transport of cholesterol from tissues to the liver for excretion by promoting cholesterol efflux from tissues and by acting as a cofactor for the lecithin cholesterol acyltransferase (LCAT). As part of the SPAP complex, activates spermatozoa motility.</text>
</comment>
<comment type="subunit">
    <text evidence="2 3 4">Homodimer (By similarity). Interacts with APOA1BP and CLU. Component of a sperm activating protein complex (SPAP), consisting of APOA1, an immunoglobulin heavy chain, an immunoglobulin light chain and albumin. Interacts with NDRG1. Interacts with SCGB3A2 (By similarity). Interacts with NAXE and YJEFN3 (By similarity).</text>
</comment>
<comment type="subcellular location">
    <subcellularLocation>
        <location>Secreted</location>
    </subcellularLocation>
</comment>
<comment type="tissue specificity">
    <text>Major protein of plasma HDL, also found in chylomicrons.</text>
</comment>
<comment type="PTM">
    <text evidence="1">Glycosylated.</text>
</comment>
<comment type="PTM">
    <text evidence="1">Palmitoylated.</text>
</comment>
<comment type="PTM">
    <text evidence="1">Phosphorylation sites are present in the extracellular medium.</text>
</comment>
<comment type="similarity">
    <text evidence="5">Belongs to the apolipoprotein A1/A4/E family.</text>
</comment>
<proteinExistence type="evidence at transcript level"/>
<protein>
    <recommendedName>
        <fullName>Apolipoprotein A-I</fullName>
        <shortName>Apo-AI</shortName>
        <shortName>ApoA-I</shortName>
    </recommendedName>
    <alternativeName>
        <fullName>Apolipoprotein A1</fullName>
    </alternativeName>
    <component>
        <recommendedName>
            <fullName>Proapolipoprotein A-I</fullName>
            <shortName>ProapoA-I</shortName>
        </recommendedName>
    </component>
    <component>
        <recommendedName>
            <fullName>Truncated apolipoprotein A-I</fullName>
        </recommendedName>
    </component>
</protein>